<name>PAND_CAMJJ</name>
<comment type="function">
    <text evidence="1">Catalyzes the pyruvoyl-dependent decarboxylation of aspartate to produce beta-alanine.</text>
</comment>
<comment type="catalytic activity">
    <reaction evidence="1">
        <text>L-aspartate + H(+) = beta-alanine + CO2</text>
        <dbReference type="Rhea" id="RHEA:19497"/>
        <dbReference type="ChEBI" id="CHEBI:15378"/>
        <dbReference type="ChEBI" id="CHEBI:16526"/>
        <dbReference type="ChEBI" id="CHEBI:29991"/>
        <dbReference type="ChEBI" id="CHEBI:57966"/>
        <dbReference type="EC" id="4.1.1.11"/>
    </reaction>
</comment>
<comment type="cofactor">
    <cofactor evidence="1">
        <name>pyruvate</name>
        <dbReference type="ChEBI" id="CHEBI:15361"/>
    </cofactor>
    <text evidence="1">Binds 1 pyruvoyl group covalently per subunit.</text>
</comment>
<comment type="pathway">
    <text evidence="1">Cofactor biosynthesis; (R)-pantothenate biosynthesis; beta-alanine from L-aspartate: step 1/1.</text>
</comment>
<comment type="subunit">
    <text evidence="1">Heterooctamer of four alpha and four beta subunits.</text>
</comment>
<comment type="subcellular location">
    <subcellularLocation>
        <location evidence="1">Cytoplasm</location>
    </subcellularLocation>
</comment>
<comment type="PTM">
    <text evidence="1">Is synthesized initially as an inactive proenzyme, which is activated by self-cleavage at a specific serine bond to produce a beta-subunit with a hydroxyl group at its C-terminus and an alpha-subunit with a pyruvoyl group at its N-terminus.</text>
</comment>
<comment type="similarity">
    <text evidence="1">Belongs to the PanD family.</text>
</comment>
<feature type="chain" id="PRO_0000306947" description="Aspartate 1-decarboxylase beta chain" evidence="1">
    <location>
        <begin position="1"/>
        <end position="24"/>
    </location>
</feature>
<feature type="chain" id="PRO_0000306948" description="Aspartate 1-decarboxylase alpha chain" evidence="1">
    <location>
        <begin position="25"/>
        <end position="126"/>
    </location>
</feature>
<feature type="active site" description="Schiff-base intermediate with substrate; via pyruvic acid" evidence="1">
    <location>
        <position position="25"/>
    </location>
</feature>
<feature type="active site" description="Proton donor" evidence="1">
    <location>
        <position position="58"/>
    </location>
</feature>
<feature type="binding site" evidence="1">
    <location>
        <position position="57"/>
    </location>
    <ligand>
        <name>substrate</name>
    </ligand>
</feature>
<feature type="binding site" evidence="1">
    <location>
        <begin position="72"/>
        <end position="74"/>
    </location>
    <ligand>
        <name>substrate</name>
    </ligand>
</feature>
<feature type="modified residue" description="Pyruvic acid (Ser)" evidence="1">
    <location>
        <position position="25"/>
    </location>
</feature>
<reference key="1">
    <citation type="submission" date="2005-02" db="EMBL/GenBank/DDBJ databases">
        <title>Global expression profiling of the flagella regulon of Campylobacter jejuni 81-176 reveals a novel virulence determinant.</title>
        <authorList>
            <person name="Goon S.C."/>
            <person name="Holder L."/>
            <person name="Majam G."/>
            <person name="Lorenzo M."/>
            <person name="Pattarini D."/>
            <person name="Ewing C.P."/>
            <person name="Batchelor R."/>
            <person name="Guerry P."/>
        </authorList>
    </citation>
    <scope>NUCLEOTIDE SEQUENCE [GENOMIC DNA]</scope>
</reference>
<reference key="2">
    <citation type="submission" date="2006-12" db="EMBL/GenBank/DDBJ databases">
        <authorList>
            <person name="Fouts D.E."/>
            <person name="Nelson K.E."/>
            <person name="Sebastian Y."/>
        </authorList>
    </citation>
    <scope>NUCLEOTIDE SEQUENCE [LARGE SCALE GENOMIC DNA]</scope>
    <source>
        <strain>81-176</strain>
    </source>
</reference>
<dbReference type="EC" id="4.1.1.11" evidence="1"/>
<dbReference type="EMBL" id="AY923838">
    <property type="protein sequence ID" value="AAX99086.1"/>
    <property type="molecule type" value="Genomic_DNA"/>
</dbReference>
<dbReference type="EMBL" id="CP000538">
    <property type="protein sequence ID" value="EAQ73317.1"/>
    <property type="molecule type" value="Genomic_DNA"/>
</dbReference>
<dbReference type="RefSeq" id="WP_002854245.1">
    <property type="nucleotide sequence ID" value="NC_008787.1"/>
</dbReference>
<dbReference type="SMR" id="Q29W39"/>
<dbReference type="KEGG" id="cjj:CJJ81176_0319"/>
<dbReference type="eggNOG" id="COG0853">
    <property type="taxonomic scope" value="Bacteria"/>
</dbReference>
<dbReference type="HOGENOM" id="CLU_115305_2_0_7"/>
<dbReference type="UniPathway" id="UPA00028">
    <property type="reaction ID" value="UER00002"/>
</dbReference>
<dbReference type="Proteomes" id="UP000000646">
    <property type="component" value="Chromosome"/>
</dbReference>
<dbReference type="GO" id="GO:0005829">
    <property type="term" value="C:cytosol"/>
    <property type="evidence" value="ECO:0007669"/>
    <property type="project" value="TreeGrafter"/>
</dbReference>
<dbReference type="GO" id="GO:0004068">
    <property type="term" value="F:aspartate 1-decarboxylase activity"/>
    <property type="evidence" value="ECO:0007669"/>
    <property type="project" value="UniProtKB-UniRule"/>
</dbReference>
<dbReference type="GO" id="GO:0006523">
    <property type="term" value="P:alanine biosynthetic process"/>
    <property type="evidence" value="ECO:0007669"/>
    <property type="project" value="InterPro"/>
</dbReference>
<dbReference type="GO" id="GO:0015940">
    <property type="term" value="P:pantothenate biosynthetic process"/>
    <property type="evidence" value="ECO:0007669"/>
    <property type="project" value="UniProtKB-UniRule"/>
</dbReference>
<dbReference type="CDD" id="cd06919">
    <property type="entry name" value="Asp_decarbox"/>
    <property type="match status" value="1"/>
</dbReference>
<dbReference type="Gene3D" id="2.40.40.20">
    <property type="match status" value="1"/>
</dbReference>
<dbReference type="HAMAP" id="MF_00446">
    <property type="entry name" value="PanD"/>
    <property type="match status" value="1"/>
</dbReference>
<dbReference type="InterPro" id="IPR009010">
    <property type="entry name" value="Asp_de-COase-like_dom_sf"/>
</dbReference>
<dbReference type="InterPro" id="IPR003190">
    <property type="entry name" value="Asp_decarbox"/>
</dbReference>
<dbReference type="NCBIfam" id="TIGR00223">
    <property type="entry name" value="panD"/>
    <property type="match status" value="1"/>
</dbReference>
<dbReference type="PANTHER" id="PTHR21012">
    <property type="entry name" value="ASPARTATE 1-DECARBOXYLASE"/>
    <property type="match status" value="1"/>
</dbReference>
<dbReference type="PANTHER" id="PTHR21012:SF0">
    <property type="entry name" value="ASPARTATE 1-DECARBOXYLASE"/>
    <property type="match status" value="1"/>
</dbReference>
<dbReference type="Pfam" id="PF02261">
    <property type="entry name" value="Asp_decarbox"/>
    <property type="match status" value="1"/>
</dbReference>
<dbReference type="PIRSF" id="PIRSF006246">
    <property type="entry name" value="Asp_decarbox"/>
    <property type="match status" value="1"/>
</dbReference>
<dbReference type="SUPFAM" id="SSF50692">
    <property type="entry name" value="ADC-like"/>
    <property type="match status" value="1"/>
</dbReference>
<gene>
    <name evidence="1" type="primary">panD</name>
    <name type="ordered locus">CJJ81176_0319</name>
</gene>
<proteinExistence type="inferred from homology"/>
<sequence length="126" mass="13987">MNITLLKSKIHRANVTEARLDYVGSISIDEKLLQASGILEYEKVQVVNVNNGARFETYTIATQEEGVVCLNGAAARLAEVGDKVIIMSYADFNEEEAKTFKPKVVFVDENNTATKITNYEKHGAIF</sequence>
<protein>
    <recommendedName>
        <fullName evidence="1">Aspartate 1-decarboxylase</fullName>
        <ecNumber evidence="1">4.1.1.11</ecNumber>
    </recommendedName>
    <alternativeName>
        <fullName evidence="1">Aspartate alpha-decarboxylase</fullName>
    </alternativeName>
    <component>
        <recommendedName>
            <fullName evidence="1">Aspartate 1-decarboxylase beta chain</fullName>
        </recommendedName>
    </component>
    <component>
        <recommendedName>
            <fullName evidence="1">Aspartate 1-decarboxylase alpha chain</fullName>
        </recommendedName>
    </component>
</protein>
<evidence type="ECO:0000255" key="1">
    <source>
        <dbReference type="HAMAP-Rule" id="MF_00446"/>
    </source>
</evidence>
<keyword id="KW-0068">Autocatalytic cleavage</keyword>
<keyword id="KW-0963">Cytoplasm</keyword>
<keyword id="KW-0210">Decarboxylase</keyword>
<keyword id="KW-0456">Lyase</keyword>
<keyword id="KW-0566">Pantothenate biosynthesis</keyword>
<keyword id="KW-0670">Pyruvate</keyword>
<keyword id="KW-0704">Schiff base</keyword>
<keyword id="KW-0865">Zymogen</keyword>
<organism>
    <name type="scientific">Campylobacter jejuni subsp. jejuni serotype O:23/36 (strain 81-176)</name>
    <dbReference type="NCBI Taxonomy" id="354242"/>
    <lineage>
        <taxon>Bacteria</taxon>
        <taxon>Pseudomonadati</taxon>
        <taxon>Campylobacterota</taxon>
        <taxon>Epsilonproteobacteria</taxon>
        <taxon>Campylobacterales</taxon>
        <taxon>Campylobacteraceae</taxon>
        <taxon>Campylobacter</taxon>
    </lineage>
</organism>
<accession>Q29W39</accession>